<organism>
    <name type="scientific">Prochlorococcus marinus (strain MIT 9301)</name>
    <dbReference type="NCBI Taxonomy" id="167546"/>
    <lineage>
        <taxon>Bacteria</taxon>
        <taxon>Bacillati</taxon>
        <taxon>Cyanobacteriota</taxon>
        <taxon>Cyanophyceae</taxon>
        <taxon>Synechococcales</taxon>
        <taxon>Prochlorococcaceae</taxon>
        <taxon>Prochlorococcus</taxon>
    </lineage>
</organism>
<evidence type="ECO:0000255" key="1">
    <source>
        <dbReference type="HAMAP-Rule" id="MF_01343"/>
    </source>
</evidence>
<evidence type="ECO:0000256" key="2">
    <source>
        <dbReference type="SAM" id="MobiDB-lite"/>
    </source>
</evidence>
<evidence type="ECO:0000305" key="3"/>
<dbReference type="EMBL" id="CP000576">
    <property type="protein sequence ID" value="ABO17538.1"/>
    <property type="molecule type" value="Genomic_DNA"/>
</dbReference>
<dbReference type="RefSeq" id="WP_011862886.1">
    <property type="nucleotide sequence ID" value="NC_009091.1"/>
</dbReference>
<dbReference type="SMR" id="A3PCR3"/>
<dbReference type="STRING" id="167546.P9301_09151"/>
<dbReference type="KEGG" id="pmg:P9301_09151"/>
<dbReference type="eggNOG" id="COG0184">
    <property type="taxonomic scope" value="Bacteria"/>
</dbReference>
<dbReference type="HOGENOM" id="CLU_148518_0_0_3"/>
<dbReference type="OrthoDB" id="9799262at2"/>
<dbReference type="Proteomes" id="UP000001430">
    <property type="component" value="Chromosome"/>
</dbReference>
<dbReference type="GO" id="GO:0022627">
    <property type="term" value="C:cytosolic small ribosomal subunit"/>
    <property type="evidence" value="ECO:0007669"/>
    <property type="project" value="TreeGrafter"/>
</dbReference>
<dbReference type="GO" id="GO:0019843">
    <property type="term" value="F:rRNA binding"/>
    <property type="evidence" value="ECO:0007669"/>
    <property type="project" value="UniProtKB-UniRule"/>
</dbReference>
<dbReference type="GO" id="GO:0003735">
    <property type="term" value="F:structural constituent of ribosome"/>
    <property type="evidence" value="ECO:0007669"/>
    <property type="project" value="InterPro"/>
</dbReference>
<dbReference type="GO" id="GO:0006412">
    <property type="term" value="P:translation"/>
    <property type="evidence" value="ECO:0007669"/>
    <property type="project" value="UniProtKB-UniRule"/>
</dbReference>
<dbReference type="CDD" id="cd00353">
    <property type="entry name" value="Ribosomal_S15p_S13e"/>
    <property type="match status" value="1"/>
</dbReference>
<dbReference type="FunFam" id="1.10.287.10:FF:000002">
    <property type="entry name" value="30S ribosomal protein S15"/>
    <property type="match status" value="1"/>
</dbReference>
<dbReference type="Gene3D" id="6.10.250.3130">
    <property type="match status" value="1"/>
</dbReference>
<dbReference type="Gene3D" id="1.10.287.10">
    <property type="entry name" value="S15/NS1, RNA-binding"/>
    <property type="match status" value="1"/>
</dbReference>
<dbReference type="HAMAP" id="MF_01343_B">
    <property type="entry name" value="Ribosomal_uS15_B"/>
    <property type="match status" value="1"/>
</dbReference>
<dbReference type="InterPro" id="IPR000589">
    <property type="entry name" value="Ribosomal_uS15"/>
</dbReference>
<dbReference type="InterPro" id="IPR005290">
    <property type="entry name" value="Ribosomal_uS15_bac-type"/>
</dbReference>
<dbReference type="InterPro" id="IPR009068">
    <property type="entry name" value="uS15_NS1_RNA-bd_sf"/>
</dbReference>
<dbReference type="NCBIfam" id="TIGR00952">
    <property type="entry name" value="S15_bact"/>
    <property type="match status" value="1"/>
</dbReference>
<dbReference type="PANTHER" id="PTHR23321">
    <property type="entry name" value="RIBOSOMAL PROTEIN S15, BACTERIAL AND ORGANELLAR"/>
    <property type="match status" value="1"/>
</dbReference>
<dbReference type="PANTHER" id="PTHR23321:SF26">
    <property type="entry name" value="SMALL RIBOSOMAL SUBUNIT PROTEIN US15M"/>
    <property type="match status" value="1"/>
</dbReference>
<dbReference type="Pfam" id="PF00312">
    <property type="entry name" value="Ribosomal_S15"/>
    <property type="match status" value="1"/>
</dbReference>
<dbReference type="SMART" id="SM01387">
    <property type="entry name" value="Ribosomal_S15"/>
    <property type="match status" value="1"/>
</dbReference>
<dbReference type="SUPFAM" id="SSF47060">
    <property type="entry name" value="S15/NS1 RNA-binding domain"/>
    <property type="match status" value="1"/>
</dbReference>
<dbReference type="PROSITE" id="PS00362">
    <property type="entry name" value="RIBOSOMAL_S15"/>
    <property type="match status" value="1"/>
</dbReference>
<comment type="function">
    <text evidence="1">One of the primary rRNA binding proteins, it binds directly to 16S rRNA where it helps nucleate assembly of the platform of the 30S subunit by binding and bridging several RNA helices of the 16S rRNA.</text>
</comment>
<comment type="function">
    <text evidence="1">Forms an intersubunit bridge (bridge B4) with the 23S rRNA of the 50S subunit in the ribosome.</text>
</comment>
<comment type="subunit">
    <text evidence="1">Part of the 30S ribosomal subunit. Forms a bridge to the 50S subunit in the 70S ribosome, contacting the 23S rRNA.</text>
</comment>
<comment type="similarity">
    <text evidence="1">Belongs to the universal ribosomal protein uS15 family.</text>
</comment>
<reference key="1">
    <citation type="journal article" date="2007" name="PLoS Genet.">
        <title>Patterns and implications of gene gain and loss in the evolution of Prochlorococcus.</title>
        <authorList>
            <person name="Kettler G.C."/>
            <person name="Martiny A.C."/>
            <person name="Huang K."/>
            <person name="Zucker J."/>
            <person name="Coleman M.L."/>
            <person name="Rodrigue S."/>
            <person name="Chen F."/>
            <person name="Lapidus A."/>
            <person name="Ferriera S."/>
            <person name="Johnson J."/>
            <person name="Steglich C."/>
            <person name="Church G.M."/>
            <person name="Richardson P."/>
            <person name="Chisholm S.W."/>
        </authorList>
    </citation>
    <scope>NUCLEOTIDE SEQUENCE [LARGE SCALE GENOMIC DNA]</scope>
    <source>
        <strain>MIT 9301</strain>
    </source>
</reference>
<proteinExistence type="inferred from homology"/>
<protein>
    <recommendedName>
        <fullName evidence="1">Small ribosomal subunit protein uS15</fullName>
    </recommendedName>
    <alternativeName>
        <fullName evidence="3">30S ribosomal protein S15</fullName>
    </alternativeName>
</protein>
<gene>
    <name evidence="1" type="primary">rpsO</name>
    <name evidence="1" type="synonym">rps15</name>
    <name type="ordered locus">P9301_09151</name>
</gene>
<accession>A3PCR3</accession>
<sequence>MSLDTAEKQKLIENHQVHPTDTGSAEVQVAMLSKRISKLSDHLQGNIHDFASRQGLLKMIGKRKRLLSYLKDKNVQKYQELVKKIGIRG</sequence>
<keyword id="KW-1185">Reference proteome</keyword>
<keyword id="KW-0687">Ribonucleoprotein</keyword>
<keyword id="KW-0689">Ribosomal protein</keyword>
<keyword id="KW-0694">RNA-binding</keyword>
<keyword id="KW-0699">rRNA-binding</keyword>
<feature type="chain" id="PRO_1000054838" description="Small ribosomal subunit protein uS15">
    <location>
        <begin position="1"/>
        <end position="89"/>
    </location>
</feature>
<feature type="region of interest" description="Disordered" evidence="2">
    <location>
        <begin position="1"/>
        <end position="23"/>
    </location>
</feature>
<feature type="compositionally biased region" description="Basic and acidic residues" evidence="2">
    <location>
        <begin position="1"/>
        <end position="18"/>
    </location>
</feature>
<name>RS15_PROM0</name>